<keyword id="KW-0687">Ribonucleoprotein</keyword>
<keyword id="KW-0689">Ribosomal protein</keyword>
<keyword id="KW-0694">RNA-binding</keyword>
<keyword id="KW-0699">rRNA-binding</keyword>
<gene>
    <name evidence="1" type="primary">rpsH</name>
    <name type="ordered locus">BF3989</name>
</gene>
<comment type="function">
    <text evidence="1">One of the primary rRNA binding proteins, it binds directly to 16S rRNA central domain where it helps coordinate assembly of the platform of the 30S subunit.</text>
</comment>
<comment type="subunit">
    <text evidence="1">Part of the 30S ribosomal subunit. Contacts proteins S5 and S12.</text>
</comment>
<comment type="similarity">
    <text evidence="1">Belongs to the universal ribosomal protein uS8 family.</text>
</comment>
<dbReference type="EMBL" id="CR626927">
    <property type="protein sequence ID" value="CAH09665.1"/>
    <property type="molecule type" value="Genomic_DNA"/>
</dbReference>
<dbReference type="RefSeq" id="WP_005782213.1">
    <property type="nucleotide sequence ID" value="NZ_UFTH01000001.1"/>
</dbReference>
<dbReference type="SMR" id="Q5L8C3"/>
<dbReference type="PaxDb" id="272559-BF9343_3884"/>
<dbReference type="GeneID" id="93105310"/>
<dbReference type="KEGG" id="bfs:BF9343_3884"/>
<dbReference type="eggNOG" id="COG0096">
    <property type="taxonomic scope" value="Bacteria"/>
</dbReference>
<dbReference type="HOGENOM" id="CLU_098428_0_2_10"/>
<dbReference type="Proteomes" id="UP000006731">
    <property type="component" value="Chromosome"/>
</dbReference>
<dbReference type="GO" id="GO:1990904">
    <property type="term" value="C:ribonucleoprotein complex"/>
    <property type="evidence" value="ECO:0007669"/>
    <property type="project" value="UniProtKB-KW"/>
</dbReference>
<dbReference type="GO" id="GO:0005840">
    <property type="term" value="C:ribosome"/>
    <property type="evidence" value="ECO:0007669"/>
    <property type="project" value="UniProtKB-KW"/>
</dbReference>
<dbReference type="GO" id="GO:0019843">
    <property type="term" value="F:rRNA binding"/>
    <property type="evidence" value="ECO:0007669"/>
    <property type="project" value="UniProtKB-UniRule"/>
</dbReference>
<dbReference type="GO" id="GO:0003735">
    <property type="term" value="F:structural constituent of ribosome"/>
    <property type="evidence" value="ECO:0007669"/>
    <property type="project" value="InterPro"/>
</dbReference>
<dbReference type="GO" id="GO:0006412">
    <property type="term" value="P:translation"/>
    <property type="evidence" value="ECO:0007669"/>
    <property type="project" value="UniProtKB-UniRule"/>
</dbReference>
<dbReference type="FunFam" id="3.30.1370.30:FF:000005">
    <property type="entry name" value="30S ribosomal protein S8"/>
    <property type="match status" value="1"/>
</dbReference>
<dbReference type="FunFam" id="3.30.1490.10:FF:000001">
    <property type="entry name" value="30S ribosomal protein S8"/>
    <property type="match status" value="1"/>
</dbReference>
<dbReference type="Gene3D" id="3.30.1370.30">
    <property type="match status" value="1"/>
</dbReference>
<dbReference type="Gene3D" id="3.30.1490.10">
    <property type="match status" value="1"/>
</dbReference>
<dbReference type="HAMAP" id="MF_01302_B">
    <property type="entry name" value="Ribosomal_uS8_B"/>
    <property type="match status" value="1"/>
</dbReference>
<dbReference type="InterPro" id="IPR000630">
    <property type="entry name" value="Ribosomal_uS8"/>
</dbReference>
<dbReference type="InterPro" id="IPR047863">
    <property type="entry name" value="Ribosomal_uS8_CS"/>
</dbReference>
<dbReference type="InterPro" id="IPR035987">
    <property type="entry name" value="Ribosomal_uS8_sf"/>
</dbReference>
<dbReference type="NCBIfam" id="NF001109">
    <property type="entry name" value="PRK00136.1"/>
    <property type="match status" value="1"/>
</dbReference>
<dbReference type="PANTHER" id="PTHR11758">
    <property type="entry name" value="40S RIBOSOMAL PROTEIN S15A"/>
    <property type="match status" value="1"/>
</dbReference>
<dbReference type="Pfam" id="PF00410">
    <property type="entry name" value="Ribosomal_S8"/>
    <property type="match status" value="1"/>
</dbReference>
<dbReference type="SUPFAM" id="SSF56047">
    <property type="entry name" value="Ribosomal protein S8"/>
    <property type="match status" value="1"/>
</dbReference>
<dbReference type="PROSITE" id="PS00053">
    <property type="entry name" value="RIBOSOMAL_S8"/>
    <property type="match status" value="1"/>
</dbReference>
<proteinExistence type="inferred from homology"/>
<protein>
    <recommendedName>
        <fullName evidence="1">Small ribosomal subunit protein uS8</fullName>
    </recommendedName>
    <alternativeName>
        <fullName evidence="2">30S ribosomal protein S8</fullName>
    </alternativeName>
</protein>
<accession>Q5L8C3</accession>
<evidence type="ECO:0000255" key="1">
    <source>
        <dbReference type="HAMAP-Rule" id="MF_01302"/>
    </source>
</evidence>
<evidence type="ECO:0000305" key="2"/>
<feature type="chain" id="PRO_0000225856" description="Small ribosomal subunit protein uS8">
    <location>
        <begin position="1"/>
        <end position="131"/>
    </location>
</feature>
<sequence length="131" mass="14639">MTDPIADYLTRLRNAINAKHRVVEVPASNLKKEITKILFEKGYILNYKFVEDGPQGTIKVALKYDSVNKVNAIKKLERISSPGMRQYTGYKDMPRVINGLGIAIISTSKGVMTNKEAAELKIGGEVLCYVY</sequence>
<reference key="1">
    <citation type="journal article" date="2005" name="Science">
        <title>Extensive DNA inversions in the B. fragilis genome control variable gene expression.</title>
        <authorList>
            <person name="Cerdeno-Tarraga A.-M."/>
            <person name="Patrick S."/>
            <person name="Crossman L.C."/>
            <person name="Blakely G."/>
            <person name="Abratt V."/>
            <person name="Lennard N."/>
            <person name="Poxton I."/>
            <person name="Duerden B."/>
            <person name="Harris B."/>
            <person name="Quail M.A."/>
            <person name="Barron A."/>
            <person name="Clark L."/>
            <person name="Corton C."/>
            <person name="Doggett J."/>
            <person name="Holden M.T.G."/>
            <person name="Larke N."/>
            <person name="Line A."/>
            <person name="Lord A."/>
            <person name="Norbertczak H."/>
            <person name="Ormond D."/>
            <person name="Price C."/>
            <person name="Rabbinowitsch E."/>
            <person name="Woodward J."/>
            <person name="Barrell B.G."/>
            <person name="Parkhill J."/>
        </authorList>
    </citation>
    <scope>NUCLEOTIDE SEQUENCE [LARGE SCALE GENOMIC DNA]</scope>
    <source>
        <strain>ATCC 25285 / DSM 2151 / CCUG 4856 / JCM 11019 / LMG 10263 / NCTC 9343 / Onslow / VPI 2553 / EN-2</strain>
    </source>
</reference>
<name>RS8_BACFN</name>
<organism>
    <name type="scientific">Bacteroides fragilis (strain ATCC 25285 / DSM 2151 / CCUG 4856 / JCM 11019 / LMG 10263 / NCTC 9343 / Onslow / VPI 2553 / EN-2)</name>
    <dbReference type="NCBI Taxonomy" id="272559"/>
    <lineage>
        <taxon>Bacteria</taxon>
        <taxon>Pseudomonadati</taxon>
        <taxon>Bacteroidota</taxon>
        <taxon>Bacteroidia</taxon>
        <taxon>Bacteroidales</taxon>
        <taxon>Bacteroidaceae</taxon>
        <taxon>Bacteroides</taxon>
    </lineage>
</organism>